<name>TDC1_CAMAC</name>
<organism>
    <name type="scientific">Camptotheca acuminata</name>
    <name type="common">Happy tree</name>
    <dbReference type="NCBI Taxonomy" id="16922"/>
    <lineage>
        <taxon>Eukaryota</taxon>
        <taxon>Viridiplantae</taxon>
        <taxon>Streptophyta</taxon>
        <taxon>Embryophyta</taxon>
        <taxon>Tracheophyta</taxon>
        <taxon>Spermatophyta</taxon>
        <taxon>Magnoliopsida</taxon>
        <taxon>eudicotyledons</taxon>
        <taxon>Gunneridae</taxon>
        <taxon>Pentapetalae</taxon>
        <taxon>asterids</taxon>
        <taxon>Cornales</taxon>
        <taxon>Nyssaceae</taxon>
        <taxon>Camptotheca</taxon>
    </lineage>
</organism>
<keyword id="KW-0210">Decarboxylase</keyword>
<keyword id="KW-0456">Lyase</keyword>
<keyword id="KW-0663">Pyridoxal phosphate</keyword>
<proteinExistence type="evidence at protein level"/>
<dbReference type="EC" id="4.1.1.105" evidence="3 4"/>
<dbReference type="EMBL" id="U73656">
    <property type="protein sequence ID" value="AAB39708.1"/>
    <property type="molecule type" value="mRNA"/>
</dbReference>
<dbReference type="EMBL" id="KU842377">
    <property type="protein sequence ID" value="AON76721.1"/>
    <property type="molecule type" value="mRNA"/>
</dbReference>
<dbReference type="SMR" id="P93082"/>
<dbReference type="KEGG" id="ag:AAB39708"/>
<dbReference type="BioCyc" id="MetaCyc:MONOMER-15093"/>
<dbReference type="BRENDA" id="4.1.1.105">
    <property type="organism ID" value="7029"/>
</dbReference>
<dbReference type="BRENDA" id="4.1.1.28">
    <property type="organism ID" value="7029"/>
</dbReference>
<dbReference type="GO" id="GO:0005737">
    <property type="term" value="C:cytoplasm"/>
    <property type="evidence" value="ECO:0007669"/>
    <property type="project" value="TreeGrafter"/>
</dbReference>
<dbReference type="GO" id="GO:0036469">
    <property type="term" value="F:L-tryptophan decarboxylase activity"/>
    <property type="evidence" value="ECO:0000314"/>
    <property type="project" value="UniProtKB"/>
</dbReference>
<dbReference type="GO" id="GO:0030170">
    <property type="term" value="F:pyridoxal phosphate binding"/>
    <property type="evidence" value="ECO:0007669"/>
    <property type="project" value="InterPro"/>
</dbReference>
<dbReference type="GO" id="GO:0006520">
    <property type="term" value="P:amino acid metabolic process"/>
    <property type="evidence" value="ECO:0007669"/>
    <property type="project" value="InterPro"/>
</dbReference>
<dbReference type="GO" id="GO:0019752">
    <property type="term" value="P:carboxylic acid metabolic process"/>
    <property type="evidence" value="ECO:0007669"/>
    <property type="project" value="InterPro"/>
</dbReference>
<dbReference type="GO" id="GO:0035835">
    <property type="term" value="P:indole alkaloid biosynthetic process"/>
    <property type="evidence" value="ECO:0000314"/>
    <property type="project" value="UniProtKB"/>
</dbReference>
<dbReference type="CDD" id="cd06450">
    <property type="entry name" value="DOPA_deC_like"/>
    <property type="match status" value="1"/>
</dbReference>
<dbReference type="FunFam" id="3.40.640.10:FF:000025">
    <property type="entry name" value="Histidine decarboxylase"/>
    <property type="match status" value="1"/>
</dbReference>
<dbReference type="Gene3D" id="3.90.1150.10">
    <property type="entry name" value="Aspartate Aminotransferase, domain 1"/>
    <property type="match status" value="1"/>
</dbReference>
<dbReference type="Gene3D" id="1.20.1340.10">
    <property type="entry name" value="dopa decarboxylase, N-terminal domain"/>
    <property type="match status" value="1"/>
</dbReference>
<dbReference type="Gene3D" id="3.40.640.10">
    <property type="entry name" value="Type I PLP-dependent aspartate aminotransferase-like (Major domain)"/>
    <property type="match status" value="1"/>
</dbReference>
<dbReference type="InterPro" id="IPR010977">
    <property type="entry name" value="Aromatic_deC"/>
</dbReference>
<dbReference type="InterPro" id="IPR002129">
    <property type="entry name" value="PyrdxlP-dep_de-COase"/>
</dbReference>
<dbReference type="InterPro" id="IPR015424">
    <property type="entry name" value="PyrdxlP-dep_Trfase"/>
</dbReference>
<dbReference type="InterPro" id="IPR015421">
    <property type="entry name" value="PyrdxlP-dep_Trfase_major"/>
</dbReference>
<dbReference type="InterPro" id="IPR015422">
    <property type="entry name" value="PyrdxlP-dep_Trfase_small"/>
</dbReference>
<dbReference type="InterPro" id="IPR021115">
    <property type="entry name" value="Pyridoxal-P_BS"/>
</dbReference>
<dbReference type="PANTHER" id="PTHR11999">
    <property type="entry name" value="GROUP II PYRIDOXAL-5-PHOSPHATE DECARBOXYLASE"/>
    <property type="match status" value="1"/>
</dbReference>
<dbReference type="PANTHER" id="PTHR11999:SF157">
    <property type="entry name" value="TRYPTOPHAN DECARBOXYLASE 1"/>
    <property type="match status" value="1"/>
</dbReference>
<dbReference type="Pfam" id="PF00282">
    <property type="entry name" value="Pyridoxal_deC"/>
    <property type="match status" value="1"/>
</dbReference>
<dbReference type="PRINTS" id="PR00800">
    <property type="entry name" value="YHDCRBOXLASE"/>
</dbReference>
<dbReference type="SUPFAM" id="SSF53383">
    <property type="entry name" value="PLP-dependent transferases"/>
    <property type="match status" value="1"/>
</dbReference>
<dbReference type="PROSITE" id="PS00392">
    <property type="entry name" value="DDC_GAD_HDC_YDC"/>
    <property type="match status" value="1"/>
</dbReference>
<protein>
    <recommendedName>
        <fullName evidence="7">Tryptophan decarboxylase TDC1</fullName>
        <ecNumber evidence="3 4">4.1.1.105</ecNumber>
    </recommendedName>
</protein>
<reference key="1">
    <citation type="journal article" date="1997" name="Plant J.">
        <title>Tryptophan decarboxylase is encoded by two autonomously regulated genes in Camptotheca acuminata which are differentially expressed during development and stress.</title>
        <authorList>
            <person name="Lopez-Meyer M."/>
            <person name="Nessler C.L."/>
        </authorList>
    </citation>
    <scope>NUCLEOTIDE SEQUENCE [MRNA]</scope>
    <scope>FUNCTION</scope>
    <scope>CATALYTIC ACTIVITY</scope>
    <scope>TISSUE SPECIFICITY</scope>
    <source>
        <tissue>Seedling</tissue>
    </source>
</reference>
<reference key="2">
    <citation type="journal article" date="2016" name="Plant Cell">
        <title>Metabolite diversity in alkaloid biosynthesis: a multilane (diastereomer) highway for camptothecin synthesis in Camptotheca acuminata.</title>
        <authorList>
            <person name="Sadre R."/>
            <person name="Magallanes-Lundback M."/>
            <person name="Pradhan S."/>
            <person name="Salim V."/>
            <person name="Mesberg A."/>
            <person name="Jones A.D."/>
            <person name="DellaPenna D."/>
        </authorList>
    </citation>
    <scope>NUCLEOTIDE SEQUENCE [MRNA]</scope>
    <scope>FUNCTION</scope>
    <scope>CATALYTIC ACTIVITY</scope>
</reference>
<evidence type="ECO:0000250" key="1">
    <source>
        <dbReference type="UniProtKB" id="P80041"/>
    </source>
</evidence>
<evidence type="ECO:0000256" key="2">
    <source>
        <dbReference type="SAM" id="MobiDB-lite"/>
    </source>
</evidence>
<evidence type="ECO:0000269" key="3">
    <source>
    </source>
</evidence>
<evidence type="ECO:0000269" key="4">
    <source>
    </source>
</evidence>
<evidence type="ECO:0000303" key="5">
    <source>
    </source>
</evidence>
<evidence type="ECO:0000303" key="6">
    <source>
    </source>
</evidence>
<evidence type="ECO:0000305" key="7"/>
<sequence>MGSLDSNYDTESPASVGQFNPLDPEEFRKQAHCIVDFIADYYKNIESYPVLSQVDPGYRHSRLGKNAPYRSEPFESILKDVQKDIIPGMTHWMSPNFFAHFPATVSSAAFVGEMLCTCFNSVGFNWLASPAATELEMVVIDWLANMLKLPKSFMFSGTGGGVLQGTTSEAILCTLIAASPMHFEIVGVKTSTSFVVYGSDQTHSTYAKACKLAGILPCNIRSIPTTADSNFSVSPLLLRRAIEADKAAGMVPLYICATVGTTSTTAIDPLSSLADVANDYGVWFHVDAAYAGSACICPEFRHYLDGIERADSLSLSPHKWLLSYLDCCCLWVKSPSLLVKALSTDPEYLKNQPSESKSVVDYKDWQVGTGRRFKALRLWFVMRSYGVANLQSHIRTDVQMAKMFEGFVKSDPRFEILVPRVFSLVCFRLNPISGSDPTGTEALNRKLLDWVNSTGRVYMTHTKVGGIYMLRFAVGATLTEKRHVSSAWKLIKEGADVLLKED</sequence>
<feature type="chain" id="PRO_0000444191" description="Tryptophan decarboxylase TDC1">
    <location>
        <begin position="1"/>
        <end position="502"/>
    </location>
</feature>
<feature type="region of interest" description="Disordered" evidence="2">
    <location>
        <begin position="1"/>
        <end position="21"/>
    </location>
</feature>
<feature type="compositionally biased region" description="Polar residues" evidence="2">
    <location>
        <begin position="1"/>
        <end position="18"/>
    </location>
</feature>
<feature type="modified residue" description="N6-(pyridoxal phosphate)lysine" evidence="1">
    <location>
        <position position="319"/>
    </location>
</feature>
<feature type="sequence conflict" description="In Ref. 2; AON76721." evidence="7" ref="2">
    <original>R</original>
    <variation>L</variation>
    <location>
        <position position="59"/>
    </location>
</feature>
<feature type="sequence conflict" description="In Ref. 2; AON76721." evidence="7" ref="2">
    <original>G</original>
    <variation>P</variation>
    <location>
        <position position="64"/>
    </location>
</feature>
<feature type="sequence conflict" description="In Ref. 2; AON76721." evidence="7" ref="2">
    <original>H</original>
    <variation>Y</variation>
    <location>
        <position position="100"/>
    </location>
</feature>
<feature type="sequence conflict" description="In Ref. 2; AON76721." evidence="7" ref="2">
    <original>SPMHF</original>
    <variation>RDRAL</variation>
    <location>
        <begin position="179"/>
        <end position="183"/>
    </location>
</feature>
<feature type="sequence conflict" description="In Ref. 2; AON76721." evidence="7" ref="2">
    <original>TSTSF</original>
    <variation>NFNKL</variation>
    <location>
        <begin position="190"/>
        <end position="194"/>
    </location>
</feature>
<gene>
    <name evidence="5 6" type="primary">TDC1</name>
</gene>
<comment type="function">
    <text evidence="3 4">Involved in the biosynthesis of tryptamine. Supplies tryptamine for the indole moiety of camptothecin (CPT), an anti-cancer monoterpene alkaloid. Represents a key step in monoterpene indole alkaloid biosynthesis. Is specific for tryptophan, and inactive against tyrosine, phenylalanine and 3,4-dihydroxyphenylalanine (dopa).</text>
</comment>
<comment type="catalytic activity">
    <reaction evidence="3 4">
        <text>L-tryptophan + H(+) = tryptamine + CO2</text>
        <dbReference type="Rhea" id="RHEA:30339"/>
        <dbReference type="ChEBI" id="CHEBI:15378"/>
        <dbReference type="ChEBI" id="CHEBI:16526"/>
        <dbReference type="ChEBI" id="CHEBI:57887"/>
        <dbReference type="ChEBI" id="CHEBI:57912"/>
        <dbReference type="EC" id="4.1.1.105"/>
    </reaction>
</comment>
<comment type="cofactor">
    <cofactor evidence="1">
        <name>pyridoxal 5'-phosphate</name>
        <dbReference type="ChEBI" id="CHEBI:597326"/>
    </cofactor>
</comment>
<comment type="tissue specificity">
    <text evidence="4">Highly expressed in apex. Expressed in young stem and bark tissues. Expressed at low levels in leaves, fruits and seeds.</text>
</comment>
<comment type="similarity">
    <text evidence="7">Belongs to the group II decarboxylase family.</text>
</comment>
<accession>P93082</accession>
<accession>A0A1C9CX68</accession>